<accession>B8IJ81</accession>
<keyword id="KW-0143">Chaperone</keyword>
<keyword id="KW-0963">Cytoplasm</keyword>
<keyword id="KW-0342">GTP-binding</keyword>
<keyword id="KW-0996">Nickel insertion</keyword>
<keyword id="KW-0547">Nucleotide-binding</keyword>
<keyword id="KW-1185">Reference proteome</keyword>
<evidence type="ECO:0000255" key="1">
    <source>
        <dbReference type="HAMAP-Rule" id="MF_01389"/>
    </source>
</evidence>
<sequence>MTTSRHGPLRVGIGGPVGSGKTALMEGLCKALRARYDLCAITNDIYTKEDARLLTVAGALPEERIMGVETGGCPHTAIREDASINLAAVAEMRRRFPALDLILIESGGDNLAATFSPELADLTLYVIDVAGGEKIPRKGGPGITRSDLLVINKTDLAPLVGADLAVMEADTRRMRGSRPYVFTSLRQGEGVEEVARFVVEAGGL</sequence>
<reference key="1">
    <citation type="submission" date="2009-01" db="EMBL/GenBank/DDBJ databases">
        <title>Complete sequence of chromosome of Methylobacterium nodulans ORS 2060.</title>
        <authorList>
            <consortium name="US DOE Joint Genome Institute"/>
            <person name="Lucas S."/>
            <person name="Copeland A."/>
            <person name="Lapidus A."/>
            <person name="Glavina del Rio T."/>
            <person name="Dalin E."/>
            <person name="Tice H."/>
            <person name="Bruce D."/>
            <person name="Goodwin L."/>
            <person name="Pitluck S."/>
            <person name="Sims D."/>
            <person name="Brettin T."/>
            <person name="Detter J.C."/>
            <person name="Han C."/>
            <person name="Larimer F."/>
            <person name="Land M."/>
            <person name="Hauser L."/>
            <person name="Kyrpides N."/>
            <person name="Ivanova N."/>
            <person name="Marx C.J."/>
            <person name="Richardson P."/>
        </authorList>
    </citation>
    <scope>NUCLEOTIDE SEQUENCE [LARGE SCALE GENOMIC DNA]</scope>
    <source>
        <strain>LMG 21967 / CNCM I-2342 / ORS 2060</strain>
    </source>
</reference>
<protein>
    <recommendedName>
        <fullName evidence="1">Urease accessory protein UreG</fullName>
    </recommendedName>
</protein>
<dbReference type="EMBL" id="CP001349">
    <property type="protein sequence ID" value="ACL56096.1"/>
    <property type="molecule type" value="Genomic_DNA"/>
</dbReference>
<dbReference type="RefSeq" id="WP_015927794.1">
    <property type="nucleotide sequence ID" value="NC_011894.1"/>
</dbReference>
<dbReference type="SMR" id="B8IJ81"/>
<dbReference type="STRING" id="460265.Mnod_1089"/>
<dbReference type="KEGG" id="mno:Mnod_1089"/>
<dbReference type="eggNOG" id="COG0378">
    <property type="taxonomic scope" value="Bacteria"/>
</dbReference>
<dbReference type="HOGENOM" id="CLU_072144_1_0_5"/>
<dbReference type="OrthoDB" id="9802035at2"/>
<dbReference type="Proteomes" id="UP000008207">
    <property type="component" value="Chromosome"/>
</dbReference>
<dbReference type="GO" id="GO:0005737">
    <property type="term" value="C:cytoplasm"/>
    <property type="evidence" value="ECO:0007669"/>
    <property type="project" value="UniProtKB-SubCell"/>
</dbReference>
<dbReference type="GO" id="GO:0005525">
    <property type="term" value="F:GTP binding"/>
    <property type="evidence" value="ECO:0007669"/>
    <property type="project" value="UniProtKB-KW"/>
</dbReference>
<dbReference type="GO" id="GO:0003924">
    <property type="term" value="F:GTPase activity"/>
    <property type="evidence" value="ECO:0007669"/>
    <property type="project" value="InterPro"/>
</dbReference>
<dbReference type="GO" id="GO:0016151">
    <property type="term" value="F:nickel cation binding"/>
    <property type="evidence" value="ECO:0007669"/>
    <property type="project" value="UniProtKB-UniRule"/>
</dbReference>
<dbReference type="GO" id="GO:0043419">
    <property type="term" value="P:urea catabolic process"/>
    <property type="evidence" value="ECO:0007669"/>
    <property type="project" value="InterPro"/>
</dbReference>
<dbReference type="CDD" id="cd05540">
    <property type="entry name" value="UreG"/>
    <property type="match status" value="1"/>
</dbReference>
<dbReference type="FunFam" id="3.40.50.300:FF:000208">
    <property type="entry name" value="Urease accessory protein UreG"/>
    <property type="match status" value="1"/>
</dbReference>
<dbReference type="Gene3D" id="3.40.50.300">
    <property type="entry name" value="P-loop containing nucleotide triphosphate hydrolases"/>
    <property type="match status" value="1"/>
</dbReference>
<dbReference type="HAMAP" id="MF_01389">
    <property type="entry name" value="UreG"/>
    <property type="match status" value="1"/>
</dbReference>
<dbReference type="InterPro" id="IPR003495">
    <property type="entry name" value="CobW/HypB/UreG_nucleotide-bd"/>
</dbReference>
<dbReference type="InterPro" id="IPR027417">
    <property type="entry name" value="P-loop_NTPase"/>
</dbReference>
<dbReference type="InterPro" id="IPR004400">
    <property type="entry name" value="UreG"/>
</dbReference>
<dbReference type="NCBIfam" id="TIGR00101">
    <property type="entry name" value="ureG"/>
    <property type="match status" value="1"/>
</dbReference>
<dbReference type="PANTHER" id="PTHR31715">
    <property type="entry name" value="UREASE ACCESSORY PROTEIN G"/>
    <property type="match status" value="1"/>
</dbReference>
<dbReference type="PANTHER" id="PTHR31715:SF0">
    <property type="entry name" value="UREASE ACCESSORY PROTEIN G"/>
    <property type="match status" value="1"/>
</dbReference>
<dbReference type="Pfam" id="PF02492">
    <property type="entry name" value="cobW"/>
    <property type="match status" value="1"/>
</dbReference>
<dbReference type="PIRSF" id="PIRSF005624">
    <property type="entry name" value="Ni-bind_GTPase"/>
    <property type="match status" value="1"/>
</dbReference>
<dbReference type="SUPFAM" id="SSF52540">
    <property type="entry name" value="P-loop containing nucleoside triphosphate hydrolases"/>
    <property type="match status" value="1"/>
</dbReference>
<organism>
    <name type="scientific">Methylobacterium nodulans (strain LMG 21967 / CNCM I-2342 / ORS 2060)</name>
    <dbReference type="NCBI Taxonomy" id="460265"/>
    <lineage>
        <taxon>Bacteria</taxon>
        <taxon>Pseudomonadati</taxon>
        <taxon>Pseudomonadota</taxon>
        <taxon>Alphaproteobacteria</taxon>
        <taxon>Hyphomicrobiales</taxon>
        <taxon>Methylobacteriaceae</taxon>
        <taxon>Methylobacterium</taxon>
    </lineage>
</organism>
<proteinExistence type="inferred from homology"/>
<gene>
    <name evidence="1" type="primary">ureG</name>
    <name type="ordered locus">Mnod_1089</name>
</gene>
<feature type="chain" id="PRO_1000184264" description="Urease accessory protein UreG">
    <location>
        <begin position="1"/>
        <end position="204"/>
    </location>
</feature>
<feature type="binding site" evidence="1">
    <location>
        <begin position="15"/>
        <end position="22"/>
    </location>
    <ligand>
        <name>GTP</name>
        <dbReference type="ChEBI" id="CHEBI:37565"/>
    </ligand>
</feature>
<comment type="function">
    <text evidence="1">Facilitates the functional incorporation of the urease nickel metallocenter. This process requires GTP hydrolysis, probably effectuated by UreG.</text>
</comment>
<comment type="subunit">
    <text evidence="1">Homodimer. UreD, UreF and UreG form a complex that acts as a GTP-hydrolysis-dependent molecular chaperone, activating the urease apoprotein by helping to assemble the nickel containing metallocenter of UreC. The UreE protein probably delivers the nickel.</text>
</comment>
<comment type="subcellular location">
    <subcellularLocation>
        <location evidence="1">Cytoplasm</location>
    </subcellularLocation>
</comment>
<comment type="similarity">
    <text evidence="1">Belongs to the SIMIBI class G3E GTPase family. UreG subfamily.</text>
</comment>
<name>UREG_METNO</name>